<organism>
    <name type="scientific">Bacillus subtilis (strain 168)</name>
    <dbReference type="NCBI Taxonomy" id="224308"/>
    <lineage>
        <taxon>Bacteria</taxon>
        <taxon>Bacillati</taxon>
        <taxon>Bacillota</taxon>
        <taxon>Bacilli</taxon>
        <taxon>Bacillales</taxon>
        <taxon>Bacillaceae</taxon>
        <taxon>Bacillus</taxon>
    </lineage>
</organism>
<proteinExistence type="predicted"/>
<sequence length="258" mass="28709">MVSQEAVVFLALSGAIAFLLPIGLIVWFKRKYGASLKVFFIGALTFFVFAQLLEGGVHVYVLQVNEMTKEAMQHPLWYGIYGCLMAGIFEECGRYLMMRFFMKRHHTWADGLAFGAGHGGLEAILITGLSSISLIVYAFAINSGTFEQLLVNGDVKQALLPIQEQLLHTPSYEWMLGGIERISAIAVQIGLSLLVLYAVKNRRPLFLLYSILLHALFNVPAVLYQRGIIEHAAAVEIIVALIAALSVYWIVKAKRVFQ</sequence>
<feature type="chain" id="PRO_0000360181" description="Uncharacterized membrane protein YhfC">
    <location>
        <begin position="1"/>
        <end position="258"/>
    </location>
</feature>
<feature type="transmembrane region" description="Helical" evidence="1">
    <location>
        <begin position="8"/>
        <end position="28"/>
    </location>
</feature>
<feature type="transmembrane region" description="Helical" evidence="1">
    <location>
        <begin position="38"/>
        <end position="58"/>
    </location>
</feature>
<feature type="transmembrane region" description="Helical" evidence="1">
    <location>
        <begin position="70"/>
        <end position="90"/>
    </location>
</feature>
<feature type="transmembrane region" description="Helical" evidence="1">
    <location>
        <begin position="121"/>
        <end position="141"/>
    </location>
</feature>
<feature type="transmembrane region" description="Helical" evidence="1">
    <location>
        <begin position="176"/>
        <end position="196"/>
    </location>
</feature>
<feature type="transmembrane region" description="Helical" evidence="1">
    <location>
        <begin position="204"/>
        <end position="224"/>
    </location>
</feature>
<feature type="transmembrane region" description="Helical" evidence="1">
    <location>
        <begin position="231"/>
        <end position="251"/>
    </location>
</feature>
<accession>O07601</accession>
<accession>Q796U7</accession>
<gene>
    <name type="primary">yhfC</name>
    <name type="ordered locus">BSU10180</name>
</gene>
<name>YHFC_BACSU</name>
<protein>
    <recommendedName>
        <fullName>Uncharacterized membrane protein YhfC</fullName>
    </recommendedName>
</protein>
<comment type="subcellular location">
    <subcellularLocation>
        <location evidence="2">Cell membrane</location>
        <topology evidence="2">Multi-pass membrane protein</topology>
    </subcellularLocation>
</comment>
<reference key="1">
    <citation type="journal article" date="1998" name="Microbiology">
        <title>The 172 kb prkA-addAB region from 83 degrees to 97 degrees of the Bacillus subtilis chromosome contains several dysfunctional genes, the glyB marker, many genes encoding transporter proteins, and the ubiquitous hit gene.</title>
        <authorList>
            <person name="Noback M.A."/>
            <person name="Holsappel S."/>
            <person name="Kiewiet R."/>
            <person name="Terpstra P."/>
            <person name="Wambutt R."/>
            <person name="Wedler H."/>
            <person name="Venema G."/>
            <person name="Bron S."/>
        </authorList>
    </citation>
    <scope>NUCLEOTIDE SEQUENCE [GENOMIC DNA]</scope>
    <source>
        <strain>168</strain>
    </source>
</reference>
<reference key="2">
    <citation type="journal article" date="1997" name="Nature">
        <title>The complete genome sequence of the Gram-positive bacterium Bacillus subtilis.</title>
        <authorList>
            <person name="Kunst F."/>
            <person name="Ogasawara N."/>
            <person name="Moszer I."/>
            <person name="Albertini A.M."/>
            <person name="Alloni G."/>
            <person name="Azevedo V."/>
            <person name="Bertero M.G."/>
            <person name="Bessieres P."/>
            <person name="Bolotin A."/>
            <person name="Borchert S."/>
            <person name="Borriss R."/>
            <person name="Boursier L."/>
            <person name="Brans A."/>
            <person name="Braun M."/>
            <person name="Brignell S.C."/>
            <person name="Bron S."/>
            <person name="Brouillet S."/>
            <person name="Bruschi C.V."/>
            <person name="Caldwell B."/>
            <person name="Capuano V."/>
            <person name="Carter N.M."/>
            <person name="Choi S.-K."/>
            <person name="Codani J.-J."/>
            <person name="Connerton I.F."/>
            <person name="Cummings N.J."/>
            <person name="Daniel R.A."/>
            <person name="Denizot F."/>
            <person name="Devine K.M."/>
            <person name="Duesterhoeft A."/>
            <person name="Ehrlich S.D."/>
            <person name="Emmerson P.T."/>
            <person name="Entian K.-D."/>
            <person name="Errington J."/>
            <person name="Fabret C."/>
            <person name="Ferrari E."/>
            <person name="Foulger D."/>
            <person name="Fritz C."/>
            <person name="Fujita M."/>
            <person name="Fujita Y."/>
            <person name="Fuma S."/>
            <person name="Galizzi A."/>
            <person name="Galleron N."/>
            <person name="Ghim S.-Y."/>
            <person name="Glaser P."/>
            <person name="Goffeau A."/>
            <person name="Golightly E.J."/>
            <person name="Grandi G."/>
            <person name="Guiseppi G."/>
            <person name="Guy B.J."/>
            <person name="Haga K."/>
            <person name="Haiech J."/>
            <person name="Harwood C.R."/>
            <person name="Henaut A."/>
            <person name="Hilbert H."/>
            <person name="Holsappel S."/>
            <person name="Hosono S."/>
            <person name="Hullo M.-F."/>
            <person name="Itaya M."/>
            <person name="Jones L.-M."/>
            <person name="Joris B."/>
            <person name="Karamata D."/>
            <person name="Kasahara Y."/>
            <person name="Klaerr-Blanchard M."/>
            <person name="Klein C."/>
            <person name="Kobayashi Y."/>
            <person name="Koetter P."/>
            <person name="Koningstein G."/>
            <person name="Krogh S."/>
            <person name="Kumano M."/>
            <person name="Kurita K."/>
            <person name="Lapidus A."/>
            <person name="Lardinois S."/>
            <person name="Lauber J."/>
            <person name="Lazarevic V."/>
            <person name="Lee S.-M."/>
            <person name="Levine A."/>
            <person name="Liu H."/>
            <person name="Masuda S."/>
            <person name="Mauel C."/>
            <person name="Medigue C."/>
            <person name="Medina N."/>
            <person name="Mellado R.P."/>
            <person name="Mizuno M."/>
            <person name="Moestl D."/>
            <person name="Nakai S."/>
            <person name="Noback M."/>
            <person name="Noone D."/>
            <person name="O'Reilly M."/>
            <person name="Ogawa K."/>
            <person name="Ogiwara A."/>
            <person name="Oudega B."/>
            <person name="Park S.-H."/>
            <person name="Parro V."/>
            <person name="Pohl T.M."/>
            <person name="Portetelle D."/>
            <person name="Porwollik S."/>
            <person name="Prescott A.M."/>
            <person name="Presecan E."/>
            <person name="Pujic P."/>
            <person name="Purnelle B."/>
            <person name="Rapoport G."/>
            <person name="Rey M."/>
            <person name="Reynolds S."/>
            <person name="Rieger M."/>
            <person name="Rivolta C."/>
            <person name="Rocha E."/>
            <person name="Roche B."/>
            <person name="Rose M."/>
            <person name="Sadaie Y."/>
            <person name="Sato T."/>
            <person name="Scanlan E."/>
            <person name="Schleich S."/>
            <person name="Schroeter R."/>
            <person name="Scoffone F."/>
            <person name="Sekiguchi J."/>
            <person name="Sekowska A."/>
            <person name="Seror S.J."/>
            <person name="Serror P."/>
            <person name="Shin B.-S."/>
            <person name="Soldo B."/>
            <person name="Sorokin A."/>
            <person name="Tacconi E."/>
            <person name="Takagi T."/>
            <person name="Takahashi H."/>
            <person name="Takemaru K."/>
            <person name="Takeuchi M."/>
            <person name="Tamakoshi A."/>
            <person name="Tanaka T."/>
            <person name="Terpstra P."/>
            <person name="Tognoni A."/>
            <person name="Tosato V."/>
            <person name="Uchiyama S."/>
            <person name="Vandenbol M."/>
            <person name="Vannier F."/>
            <person name="Vassarotti A."/>
            <person name="Viari A."/>
            <person name="Wambutt R."/>
            <person name="Wedler E."/>
            <person name="Wedler H."/>
            <person name="Weitzenegger T."/>
            <person name="Winters P."/>
            <person name="Wipat A."/>
            <person name="Yamamoto H."/>
            <person name="Yamane K."/>
            <person name="Yasumoto K."/>
            <person name="Yata K."/>
            <person name="Yoshida K."/>
            <person name="Yoshikawa H.-F."/>
            <person name="Zumstein E."/>
            <person name="Yoshikawa H."/>
            <person name="Danchin A."/>
        </authorList>
    </citation>
    <scope>NUCLEOTIDE SEQUENCE [LARGE SCALE GENOMIC DNA]</scope>
    <source>
        <strain>168</strain>
    </source>
</reference>
<evidence type="ECO:0000255" key="1"/>
<evidence type="ECO:0000305" key="2"/>
<keyword id="KW-1003">Cell membrane</keyword>
<keyword id="KW-0472">Membrane</keyword>
<keyword id="KW-1185">Reference proteome</keyword>
<keyword id="KW-0812">Transmembrane</keyword>
<keyword id="KW-1133">Transmembrane helix</keyword>
<dbReference type="EMBL" id="Y14083">
    <property type="protein sequence ID" value="CAA74524.1"/>
    <property type="molecule type" value="Genomic_DNA"/>
</dbReference>
<dbReference type="EMBL" id="AL009126">
    <property type="protein sequence ID" value="CAB12858.1"/>
    <property type="molecule type" value="Genomic_DNA"/>
</dbReference>
<dbReference type="PIR" id="A69830">
    <property type="entry name" value="A69830"/>
</dbReference>
<dbReference type="RefSeq" id="NP_388899.1">
    <property type="nucleotide sequence ID" value="NC_000964.3"/>
</dbReference>
<dbReference type="RefSeq" id="WP_003233198.1">
    <property type="nucleotide sequence ID" value="NZ_OZ025638.1"/>
</dbReference>
<dbReference type="FunCoup" id="O07601">
    <property type="interactions" value="9"/>
</dbReference>
<dbReference type="STRING" id="224308.BSU10180"/>
<dbReference type="PaxDb" id="224308-BSU10180"/>
<dbReference type="EnsemblBacteria" id="CAB12858">
    <property type="protein sequence ID" value="CAB12858"/>
    <property type="gene ID" value="BSU_10180"/>
</dbReference>
<dbReference type="GeneID" id="936308"/>
<dbReference type="KEGG" id="bsu:BSU10180"/>
<dbReference type="PATRIC" id="fig|224308.179.peg.1094"/>
<dbReference type="eggNOG" id="COG4377">
    <property type="taxonomic scope" value="Bacteria"/>
</dbReference>
<dbReference type="InParanoid" id="O07601"/>
<dbReference type="OrthoDB" id="9807167at2"/>
<dbReference type="BioCyc" id="BSUB:BSU10180-MONOMER"/>
<dbReference type="Proteomes" id="UP000001570">
    <property type="component" value="Chromosome"/>
</dbReference>
<dbReference type="GO" id="GO:0005886">
    <property type="term" value="C:plasma membrane"/>
    <property type="evidence" value="ECO:0007669"/>
    <property type="project" value="UniProtKB-SubCell"/>
</dbReference>
<dbReference type="InterPro" id="IPR011397">
    <property type="entry name" value="YhfC"/>
</dbReference>
<dbReference type="Pfam" id="PF10086">
    <property type="entry name" value="YhfC"/>
    <property type="match status" value="1"/>
</dbReference>
<dbReference type="PIRSF" id="PIRSF033101">
    <property type="entry name" value="UCP033101"/>
    <property type="match status" value="1"/>
</dbReference>